<sequence>MKFKLIIFIIIIYIIKILKSEILNEFGYGLVDENLKCLSFIGDSNNQQLCNNKLINKQLIYSTINKSNQIQSLKMVEQSFKQLTFLQGKCLNLNFAQFGICDIYFPSCVETSFGISLPKRLCKSVCKQIVTDCPTLGVSLNCSDSNKFPTIGTLYNLTKYGYTENNGFYQVECSNPTNYYYNEINSTNNQFIEICPSPLVLRNQSDSKYGEDKGYTYLSPTNCVLGCPQPFFKNNKWVQMYKMSIVLSTLSFICSIYNIITFGLLSKLKSKYNLCITFFSVSTVLMSLMDIVTYGIGYEELLCPESGRYAIQSDVACGVTGAFFHIGITTGVLWWTTMSICLYSEVKRFKMISFRYIIIFNSVISLILLIIPLSGQAFMSGNGSLGCWIRKTWYANGTFWIPCGISLFIGAICIVLVIYEIFKISRNLSKDNKPLMFQIRPFLCVLLVGGSFLYLFIFYFNNERNLDKYKAAIPSYVQCLLSSDENGEDCLTDGPGFGAYFTFYFFTRLFGITSFSIYGTSKIARDIWFESAYNHPFFNPYIVKCLSLLGISKHFSSNSISGSNQKRFNRNGSNFNMKQNKSNPNDSISLSVVESTKKQDTENELESNIETKENRSTDISIENTTSSKDSNTNSF</sequence>
<proteinExistence type="inferred from homology"/>
<gene>
    <name type="primary">fslC</name>
    <name type="ORF">DDB_G0274287</name>
</gene>
<feature type="signal peptide" evidence="2">
    <location>
        <begin position="1"/>
        <end position="20"/>
    </location>
</feature>
<feature type="chain" id="PRO_0000371365" description="Frizzled and smoothened-like protein C">
    <location>
        <begin position="21"/>
        <end position="635"/>
    </location>
</feature>
<feature type="topological domain" description="Extracellular" evidence="2">
    <location>
        <begin position="21"/>
        <end position="244"/>
    </location>
</feature>
<feature type="transmembrane region" description="Helical; Name=1" evidence="2">
    <location>
        <begin position="245"/>
        <end position="265"/>
    </location>
</feature>
<feature type="topological domain" description="Cytoplasmic" evidence="2">
    <location>
        <begin position="266"/>
        <end position="275"/>
    </location>
</feature>
<feature type="transmembrane region" description="Helical; Name=2" evidence="2">
    <location>
        <begin position="276"/>
        <end position="296"/>
    </location>
</feature>
<feature type="topological domain" description="Extracellular" evidence="2">
    <location>
        <begin position="297"/>
        <end position="314"/>
    </location>
</feature>
<feature type="transmembrane region" description="Helical; Name=3" evidence="2">
    <location>
        <begin position="315"/>
        <end position="335"/>
    </location>
</feature>
<feature type="topological domain" description="Cytoplasmic" evidence="2">
    <location>
        <begin position="336"/>
        <end position="356"/>
    </location>
</feature>
<feature type="transmembrane region" description="Helical; Name=4" evidence="2">
    <location>
        <begin position="357"/>
        <end position="377"/>
    </location>
</feature>
<feature type="topological domain" description="Extracellular" evidence="2">
    <location>
        <begin position="378"/>
        <end position="398"/>
    </location>
</feature>
<feature type="transmembrane region" description="Helical; Name=5" evidence="2">
    <location>
        <begin position="399"/>
        <end position="419"/>
    </location>
</feature>
<feature type="topological domain" description="Cytoplasmic" evidence="2">
    <location>
        <begin position="420"/>
        <end position="440"/>
    </location>
</feature>
<feature type="transmembrane region" description="Helical; Name=6" evidence="2">
    <location>
        <begin position="441"/>
        <end position="461"/>
    </location>
</feature>
<feature type="topological domain" description="Extracellular" evidence="2">
    <location>
        <begin position="462"/>
        <end position="496"/>
    </location>
</feature>
<feature type="transmembrane region" description="Helical; Name=7" evidence="2">
    <location>
        <begin position="497"/>
        <end position="517"/>
    </location>
</feature>
<feature type="topological domain" description="Cytoplasmic" evidence="2">
    <location>
        <begin position="518"/>
        <end position="635"/>
    </location>
</feature>
<feature type="domain" description="FZ">
    <location>
        <begin position="32"/>
        <end position="166"/>
    </location>
</feature>
<feature type="region of interest" description="Disordered" evidence="3">
    <location>
        <begin position="559"/>
        <end position="635"/>
    </location>
</feature>
<feature type="coiled-coil region" evidence="2">
    <location>
        <begin position="594"/>
        <end position="623"/>
    </location>
</feature>
<feature type="compositionally biased region" description="Polar residues" evidence="3">
    <location>
        <begin position="559"/>
        <end position="594"/>
    </location>
</feature>
<feature type="compositionally biased region" description="Low complexity" evidence="3">
    <location>
        <begin position="623"/>
        <end position="635"/>
    </location>
</feature>
<feature type="glycosylation site" description="N-linked (GlcNAc...) asparagine" evidence="2">
    <location>
        <position position="65"/>
    </location>
</feature>
<feature type="glycosylation site" description="N-linked (GlcNAc...) asparagine" evidence="2">
    <location>
        <position position="141"/>
    </location>
</feature>
<feature type="glycosylation site" description="N-linked (GlcNAc...) asparagine" evidence="2">
    <location>
        <position position="156"/>
    </location>
</feature>
<feature type="glycosylation site" description="N-linked (GlcNAc...) asparagine" evidence="2">
    <location>
        <position position="185"/>
    </location>
</feature>
<feature type="glycosylation site" description="N-linked (GlcNAc...) asparagine" evidence="2">
    <location>
        <position position="203"/>
    </location>
</feature>
<feature type="glycosylation site" description="N-linked (GlcNAc...) asparagine" evidence="2">
    <location>
        <position position="382"/>
    </location>
</feature>
<feature type="glycosylation site" description="N-linked (GlcNAc...) asparagine" evidence="2">
    <location>
        <position position="396"/>
    </location>
</feature>
<feature type="disulfide bond" evidence="1">
    <location>
        <begin position="37"/>
        <end position="108"/>
    </location>
</feature>
<feature type="disulfide bond" evidence="1">
    <location>
        <begin position="50"/>
        <end position="101"/>
    </location>
</feature>
<organism>
    <name type="scientific">Dictyostelium discoideum</name>
    <name type="common">Social amoeba</name>
    <dbReference type="NCBI Taxonomy" id="44689"/>
    <lineage>
        <taxon>Eukaryota</taxon>
        <taxon>Amoebozoa</taxon>
        <taxon>Evosea</taxon>
        <taxon>Eumycetozoa</taxon>
        <taxon>Dictyostelia</taxon>
        <taxon>Dictyosteliales</taxon>
        <taxon>Dictyosteliaceae</taxon>
        <taxon>Dictyostelium</taxon>
    </lineage>
</organism>
<keyword id="KW-0175">Coiled coil</keyword>
<keyword id="KW-1015">Disulfide bond</keyword>
<keyword id="KW-0325">Glycoprotein</keyword>
<keyword id="KW-0472">Membrane</keyword>
<keyword id="KW-0675">Receptor</keyword>
<keyword id="KW-1185">Reference proteome</keyword>
<keyword id="KW-0732">Signal</keyword>
<keyword id="KW-0812">Transmembrane</keyword>
<keyword id="KW-1133">Transmembrane helix</keyword>
<accession>Q86J18</accession>
<accession>Q555S3</accession>
<dbReference type="EMBL" id="AAFI02000012">
    <property type="protein sequence ID" value="EAL70036.1"/>
    <property type="molecule type" value="Genomic_DNA"/>
</dbReference>
<dbReference type="RefSeq" id="XP_643987.1">
    <property type="nucleotide sequence ID" value="XM_638895.1"/>
</dbReference>
<dbReference type="FunCoup" id="Q86J18">
    <property type="interactions" value="19"/>
</dbReference>
<dbReference type="GlyCosmos" id="Q86J18">
    <property type="glycosylation" value="7 sites, No reported glycans"/>
</dbReference>
<dbReference type="GlyGen" id="Q86J18">
    <property type="glycosylation" value="7 sites"/>
</dbReference>
<dbReference type="PaxDb" id="44689-DDB0231833"/>
<dbReference type="EnsemblProtists" id="EAL70036">
    <property type="protein sequence ID" value="EAL70036"/>
    <property type="gene ID" value="DDB_G0274287"/>
</dbReference>
<dbReference type="GeneID" id="8619413"/>
<dbReference type="KEGG" id="ddi:DDB_G0274287"/>
<dbReference type="dictyBase" id="DDB_G0274287">
    <property type="gene designation" value="fslC"/>
</dbReference>
<dbReference type="VEuPathDB" id="AmoebaDB:DDB_G0274287"/>
<dbReference type="eggNOG" id="ENOG502T166">
    <property type="taxonomic scope" value="Eukaryota"/>
</dbReference>
<dbReference type="HOGENOM" id="CLU_030318_0_0_1"/>
<dbReference type="InParanoid" id="Q86J18"/>
<dbReference type="OMA" id="IWFESAY"/>
<dbReference type="PhylomeDB" id="Q86J18"/>
<dbReference type="PRO" id="PR:Q86J18"/>
<dbReference type="Proteomes" id="UP000002195">
    <property type="component" value="Chromosome 2"/>
</dbReference>
<dbReference type="GO" id="GO:0016020">
    <property type="term" value="C:membrane"/>
    <property type="evidence" value="ECO:0007669"/>
    <property type="project" value="UniProtKB-SubCell"/>
</dbReference>
<dbReference type="GO" id="GO:0004888">
    <property type="term" value="F:transmembrane signaling receptor activity"/>
    <property type="evidence" value="ECO:0007669"/>
    <property type="project" value="InterPro"/>
</dbReference>
<dbReference type="GO" id="GO:0007166">
    <property type="term" value="P:cell surface receptor signaling pathway"/>
    <property type="evidence" value="ECO:0007669"/>
    <property type="project" value="InterPro"/>
</dbReference>
<dbReference type="CDD" id="cd07066">
    <property type="entry name" value="CRD_FZ"/>
    <property type="match status" value="1"/>
</dbReference>
<dbReference type="Gene3D" id="1.10.2000.10">
    <property type="entry name" value="Frizzled cysteine-rich domain"/>
    <property type="match status" value="1"/>
</dbReference>
<dbReference type="Gene3D" id="1.20.1070.10">
    <property type="entry name" value="Rhodopsin 7-helix transmembrane proteins"/>
    <property type="match status" value="1"/>
</dbReference>
<dbReference type="InterPro" id="IPR000539">
    <property type="entry name" value="Frizzled/Smoothened_7TM"/>
</dbReference>
<dbReference type="InterPro" id="IPR036790">
    <property type="entry name" value="Frizzled_dom_sf"/>
</dbReference>
<dbReference type="InterPro" id="IPR017981">
    <property type="entry name" value="GPCR_2-like_7TM"/>
</dbReference>
<dbReference type="InterPro" id="IPR050949">
    <property type="entry name" value="GPCR_Fz/Smo-like"/>
</dbReference>
<dbReference type="PANTHER" id="PTHR31787:SF1">
    <property type="entry name" value="FRIZZLED AND SMOOTHENED-LIKE PROTEIN B-RELATED"/>
    <property type="match status" value="1"/>
</dbReference>
<dbReference type="PANTHER" id="PTHR31787">
    <property type="entry name" value="G-PROTEIN-COUPLED RECEPTOR GPCR FAMILY PROTEIN"/>
    <property type="match status" value="1"/>
</dbReference>
<dbReference type="Pfam" id="PF01534">
    <property type="entry name" value="Frizzled"/>
    <property type="match status" value="1"/>
</dbReference>
<dbReference type="SUPFAM" id="SSF81321">
    <property type="entry name" value="Family A G protein-coupled receptor-like"/>
    <property type="match status" value="1"/>
</dbReference>
<dbReference type="SUPFAM" id="SSF63501">
    <property type="entry name" value="Frizzled cysteine-rich domain"/>
    <property type="match status" value="1"/>
</dbReference>
<dbReference type="PROSITE" id="PS50261">
    <property type="entry name" value="G_PROTEIN_RECEP_F2_4"/>
    <property type="match status" value="1"/>
</dbReference>
<name>FSLC_DICDI</name>
<comment type="subcellular location">
    <subcellularLocation>
        <location evidence="4">Membrane</location>
        <topology evidence="4">Multi-pass membrane protein</topology>
    </subcellularLocation>
</comment>
<comment type="similarity">
    <text evidence="4">Belongs to the G-protein coupled receptor Fz/Smo family.</text>
</comment>
<protein>
    <recommendedName>
        <fullName>Frizzled and smoothened-like protein C</fullName>
    </recommendedName>
</protein>
<evidence type="ECO:0000250" key="1"/>
<evidence type="ECO:0000255" key="2"/>
<evidence type="ECO:0000256" key="3">
    <source>
        <dbReference type="SAM" id="MobiDB-lite"/>
    </source>
</evidence>
<evidence type="ECO:0000305" key="4"/>
<reference key="1">
    <citation type="journal article" date="2002" name="Nature">
        <title>Sequence and analysis of chromosome 2 of Dictyostelium discoideum.</title>
        <authorList>
            <person name="Gloeckner G."/>
            <person name="Eichinger L."/>
            <person name="Szafranski K."/>
            <person name="Pachebat J.A."/>
            <person name="Bankier A.T."/>
            <person name="Dear P.H."/>
            <person name="Lehmann R."/>
            <person name="Baumgart C."/>
            <person name="Parra G."/>
            <person name="Abril J.F."/>
            <person name="Guigo R."/>
            <person name="Kumpf K."/>
            <person name="Tunggal B."/>
            <person name="Cox E.C."/>
            <person name="Quail M.A."/>
            <person name="Platzer M."/>
            <person name="Rosenthal A."/>
            <person name="Noegel A.A."/>
        </authorList>
    </citation>
    <scope>NUCLEOTIDE SEQUENCE [LARGE SCALE GENOMIC DNA]</scope>
    <source>
        <strain>AX4</strain>
    </source>
</reference>
<reference key="2">
    <citation type="journal article" date="2005" name="Nature">
        <title>The genome of the social amoeba Dictyostelium discoideum.</title>
        <authorList>
            <person name="Eichinger L."/>
            <person name="Pachebat J.A."/>
            <person name="Gloeckner G."/>
            <person name="Rajandream M.A."/>
            <person name="Sucgang R."/>
            <person name="Berriman M."/>
            <person name="Song J."/>
            <person name="Olsen R."/>
            <person name="Szafranski K."/>
            <person name="Xu Q."/>
            <person name="Tunggal B."/>
            <person name="Kummerfeld S."/>
            <person name="Madera M."/>
            <person name="Konfortov B.A."/>
            <person name="Rivero F."/>
            <person name="Bankier A.T."/>
            <person name="Lehmann R."/>
            <person name="Hamlin N."/>
            <person name="Davies R."/>
            <person name="Gaudet P."/>
            <person name="Fey P."/>
            <person name="Pilcher K."/>
            <person name="Chen G."/>
            <person name="Saunders D."/>
            <person name="Sodergren E.J."/>
            <person name="Davis P."/>
            <person name="Kerhornou A."/>
            <person name="Nie X."/>
            <person name="Hall N."/>
            <person name="Anjard C."/>
            <person name="Hemphill L."/>
            <person name="Bason N."/>
            <person name="Farbrother P."/>
            <person name="Desany B."/>
            <person name="Just E."/>
            <person name="Morio T."/>
            <person name="Rost R."/>
            <person name="Churcher C.M."/>
            <person name="Cooper J."/>
            <person name="Haydock S."/>
            <person name="van Driessche N."/>
            <person name="Cronin A."/>
            <person name="Goodhead I."/>
            <person name="Muzny D.M."/>
            <person name="Mourier T."/>
            <person name="Pain A."/>
            <person name="Lu M."/>
            <person name="Harper D."/>
            <person name="Lindsay R."/>
            <person name="Hauser H."/>
            <person name="James K.D."/>
            <person name="Quiles M."/>
            <person name="Madan Babu M."/>
            <person name="Saito T."/>
            <person name="Buchrieser C."/>
            <person name="Wardroper A."/>
            <person name="Felder M."/>
            <person name="Thangavelu M."/>
            <person name="Johnson D."/>
            <person name="Knights A."/>
            <person name="Loulseged H."/>
            <person name="Mungall K.L."/>
            <person name="Oliver K."/>
            <person name="Price C."/>
            <person name="Quail M.A."/>
            <person name="Urushihara H."/>
            <person name="Hernandez J."/>
            <person name="Rabbinowitsch E."/>
            <person name="Steffen D."/>
            <person name="Sanders M."/>
            <person name="Ma J."/>
            <person name="Kohara Y."/>
            <person name="Sharp S."/>
            <person name="Simmonds M.N."/>
            <person name="Spiegler S."/>
            <person name="Tivey A."/>
            <person name="Sugano S."/>
            <person name="White B."/>
            <person name="Walker D."/>
            <person name="Woodward J.R."/>
            <person name="Winckler T."/>
            <person name="Tanaka Y."/>
            <person name="Shaulsky G."/>
            <person name="Schleicher M."/>
            <person name="Weinstock G.M."/>
            <person name="Rosenthal A."/>
            <person name="Cox E.C."/>
            <person name="Chisholm R.L."/>
            <person name="Gibbs R.A."/>
            <person name="Loomis W.F."/>
            <person name="Platzer M."/>
            <person name="Kay R.R."/>
            <person name="Williams J.G."/>
            <person name="Dear P.H."/>
            <person name="Noegel A.A."/>
            <person name="Barrell B.G."/>
            <person name="Kuspa A."/>
        </authorList>
    </citation>
    <scope>NUCLEOTIDE SEQUENCE [LARGE SCALE GENOMIC DNA]</scope>
    <source>
        <strain>AX4</strain>
    </source>
</reference>
<reference key="3">
    <citation type="journal article" date="2006" name="Eur. J. Cell Biol.">
        <title>The Dictyostelium repertoire of seven transmembrane domain receptors.</title>
        <authorList>
            <person name="Prabhu Y."/>
            <person name="Eichinger L."/>
        </authorList>
    </citation>
    <scope>NOMENCLATURE</scope>
</reference>